<name>RL35_LACCB</name>
<organism>
    <name type="scientific">Lacticaseibacillus casei (strain BL23)</name>
    <name type="common">Lactobacillus casei</name>
    <dbReference type="NCBI Taxonomy" id="543734"/>
    <lineage>
        <taxon>Bacteria</taxon>
        <taxon>Bacillati</taxon>
        <taxon>Bacillota</taxon>
        <taxon>Bacilli</taxon>
        <taxon>Lactobacillales</taxon>
        <taxon>Lactobacillaceae</taxon>
        <taxon>Lacticaseibacillus</taxon>
    </lineage>
</organism>
<feature type="chain" id="PRO_1000127366" description="Large ribosomal subunit protein bL35">
    <location>
        <begin position="1"/>
        <end position="66"/>
    </location>
</feature>
<feature type="region of interest" description="Disordered" evidence="2">
    <location>
        <begin position="1"/>
        <end position="66"/>
    </location>
</feature>
<feature type="compositionally biased region" description="Basic residues" evidence="2">
    <location>
        <begin position="1"/>
        <end position="16"/>
    </location>
</feature>
<feature type="compositionally biased region" description="Basic residues" evidence="2">
    <location>
        <begin position="23"/>
        <end position="45"/>
    </location>
</feature>
<evidence type="ECO:0000255" key="1">
    <source>
        <dbReference type="HAMAP-Rule" id="MF_00514"/>
    </source>
</evidence>
<evidence type="ECO:0000256" key="2">
    <source>
        <dbReference type="SAM" id="MobiDB-lite"/>
    </source>
</evidence>
<evidence type="ECO:0000305" key="3"/>
<keyword id="KW-0687">Ribonucleoprotein</keyword>
<keyword id="KW-0689">Ribosomal protein</keyword>
<protein>
    <recommendedName>
        <fullName evidence="1">Large ribosomal subunit protein bL35</fullName>
    </recommendedName>
    <alternativeName>
        <fullName evidence="3">50S ribosomal protein L35</fullName>
    </alternativeName>
</protein>
<reference key="1">
    <citation type="submission" date="2008-06" db="EMBL/GenBank/DDBJ databases">
        <title>Lactobacillus casei BL23 complete genome sequence.</title>
        <authorList>
            <person name="Maze A."/>
            <person name="Boel G."/>
            <person name="Bourand A."/>
            <person name="Loux V."/>
            <person name="Gibrat J.F."/>
            <person name="Zuniga M."/>
            <person name="Hartke A."/>
            <person name="Deutscher J."/>
        </authorList>
    </citation>
    <scope>NUCLEOTIDE SEQUENCE [LARGE SCALE GENOMIC DNA]</scope>
    <source>
        <strain>BL23</strain>
    </source>
</reference>
<comment type="similarity">
    <text evidence="1">Belongs to the bacterial ribosomal protein bL35 family.</text>
</comment>
<proteinExistence type="inferred from homology"/>
<accession>B3WF44</accession>
<sequence length="66" mass="7778">MPKFKTHRASAKRFKKTASGALKRGHAYTSHRFHGKTKKQRRQLRKSALVSHSDMKRIRQMLSQMK</sequence>
<gene>
    <name evidence="1" type="primary">rpmI</name>
    <name type="ordered locus">LCABL_19160</name>
</gene>
<dbReference type="EMBL" id="FM177140">
    <property type="protein sequence ID" value="CAQ66995.1"/>
    <property type="molecule type" value="Genomic_DNA"/>
</dbReference>
<dbReference type="SMR" id="B3WF44"/>
<dbReference type="KEGG" id="lcb:LCABL_19160"/>
<dbReference type="HOGENOM" id="CLU_169643_3_1_9"/>
<dbReference type="GO" id="GO:0022625">
    <property type="term" value="C:cytosolic large ribosomal subunit"/>
    <property type="evidence" value="ECO:0007669"/>
    <property type="project" value="TreeGrafter"/>
</dbReference>
<dbReference type="GO" id="GO:0003735">
    <property type="term" value="F:structural constituent of ribosome"/>
    <property type="evidence" value="ECO:0007669"/>
    <property type="project" value="InterPro"/>
</dbReference>
<dbReference type="GO" id="GO:0006412">
    <property type="term" value="P:translation"/>
    <property type="evidence" value="ECO:0007669"/>
    <property type="project" value="UniProtKB-UniRule"/>
</dbReference>
<dbReference type="FunFam" id="4.10.410.60:FF:000001">
    <property type="entry name" value="50S ribosomal protein L35"/>
    <property type="match status" value="1"/>
</dbReference>
<dbReference type="Gene3D" id="4.10.410.60">
    <property type="match status" value="1"/>
</dbReference>
<dbReference type="HAMAP" id="MF_00514">
    <property type="entry name" value="Ribosomal_bL35"/>
    <property type="match status" value="1"/>
</dbReference>
<dbReference type="InterPro" id="IPR001706">
    <property type="entry name" value="Ribosomal_bL35"/>
</dbReference>
<dbReference type="InterPro" id="IPR021137">
    <property type="entry name" value="Ribosomal_bL35-like"/>
</dbReference>
<dbReference type="InterPro" id="IPR018265">
    <property type="entry name" value="Ribosomal_bL35_CS"/>
</dbReference>
<dbReference type="InterPro" id="IPR037229">
    <property type="entry name" value="Ribosomal_bL35_sf"/>
</dbReference>
<dbReference type="NCBIfam" id="TIGR00001">
    <property type="entry name" value="rpmI_bact"/>
    <property type="match status" value="1"/>
</dbReference>
<dbReference type="PANTHER" id="PTHR33343">
    <property type="entry name" value="54S RIBOSOMAL PROTEIN BL35M"/>
    <property type="match status" value="1"/>
</dbReference>
<dbReference type="PANTHER" id="PTHR33343:SF1">
    <property type="entry name" value="LARGE RIBOSOMAL SUBUNIT PROTEIN BL35M"/>
    <property type="match status" value="1"/>
</dbReference>
<dbReference type="Pfam" id="PF01632">
    <property type="entry name" value="Ribosomal_L35p"/>
    <property type="match status" value="1"/>
</dbReference>
<dbReference type="PRINTS" id="PR00064">
    <property type="entry name" value="RIBOSOMALL35"/>
</dbReference>
<dbReference type="SUPFAM" id="SSF143034">
    <property type="entry name" value="L35p-like"/>
    <property type="match status" value="1"/>
</dbReference>
<dbReference type="PROSITE" id="PS00936">
    <property type="entry name" value="RIBOSOMAL_L35"/>
    <property type="match status" value="1"/>
</dbReference>